<organism>
    <name type="scientific">Oryza sativa subsp. japonica</name>
    <name type="common">Rice</name>
    <dbReference type="NCBI Taxonomy" id="39947"/>
    <lineage>
        <taxon>Eukaryota</taxon>
        <taxon>Viridiplantae</taxon>
        <taxon>Streptophyta</taxon>
        <taxon>Embryophyta</taxon>
        <taxon>Tracheophyta</taxon>
        <taxon>Spermatophyta</taxon>
        <taxon>Magnoliopsida</taxon>
        <taxon>Liliopsida</taxon>
        <taxon>Poales</taxon>
        <taxon>Poaceae</taxon>
        <taxon>BOP clade</taxon>
        <taxon>Oryzoideae</taxon>
        <taxon>Oryzeae</taxon>
        <taxon>Oryzinae</taxon>
        <taxon>Oryza</taxon>
        <taxon>Oryza sativa</taxon>
    </lineage>
</organism>
<dbReference type="EMBL" id="AC134048">
    <property type="protein sequence ID" value="AAX92938.1"/>
    <property type="molecule type" value="Genomic_DNA"/>
</dbReference>
<dbReference type="EMBL" id="AC134048">
    <property type="protein sequence ID" value="AAX92939.1"/>
    <property type="status" value="ALT_SEQ"/>
    <property type="molecule type" value="Genomic_DNA"/>
</dbReference>
<dbReference type="EMBL" id="AC134048">
    <property type="protein sequence ID" value="AAX92940.1"/>
    <property type="status" value="ALT_SEQ"/>
    <property type="molecule type" value="Genomic_DNA"/>
</dbReference>
<dbReference type="EMBL" id="DP000010">
    <property type="protein sequence ID" value="ABA91549.2"/>
    <property type="status" value="ALT_SEQ"/>
    <property type="molecule type" value="Genomic_DNA"/>
</dbReference>
<dbReference type="EMBL" id="DP000010">
    <property type="protein sequence ID" value="ABA91550.2"/>
    <property type="status" value="ALT_SEQ"/>
    <property type="molecule type" value="Genomic_DNA"/>
</dbReference>
<dbReference type="EMBL" id="AP008217">
    <property type="protein sequence ID" value="BAF27643.1"/>
    <property type="status" value="ALT_SEQ"/>
    <property type="molecule type" value="Genomic_DNA"/>
</dbReference>
<dbReference type="EMBL" id="AP014967">
    <property type="status" value="NOT_ANNOTATED_CDS"/>
    <property type="molecule type" value="Genomic_DNA"/>
</dbReference>
<dbReference type="RefSeq" id="XP_015617039.1">
    <property type="nucleotide sequence ID" value="XM_015761553.1"/>
</dbReference>
<dbReference type="SMR" id="Q2RAC5"/>
<dbReference type="FunCoup" id="Q2RAC5">
    <property type="interactions" value="2446"/>
</dbReference>
<dbReference type="STRING" id="39947.Q2RAC5"/>
<dbReference type="PaxDb" id="39947-Q2RAC5"/>
<dbReference type="KEGG" id="dosa:Os11g0157100"/>
<dbReference type="eggNOG" id="KOG0834">
    <property type="taxonomic scope" value="Eukaryota"/>
</dbReference>
<dbReference type="InParanoid" id="Q2RAC5"/>
<dbReference type="OrthoDB" id="10264655at2759"/>
<dbReference type="Proteomes" id="UP000000763">
    <property type="component" value="Chromosome 11"/>
</dbReference>
<dbReference type="Proteomes" id="UP000059680">
    <property type="component" value="Chromosome 11"/>
</dbReference>
<dbReference type="GO" id="GO:0008024">
    <property type="term" value="C:cyclin/CDK positive transcription elongation factor complex"/>
    <property type="evidence" value="ECO:0000318"/>
    <property type="project" value="GO_Central"/>
</dbReference>
<dbReference type="GO" id="GO:0005634">
    <property type="term" value="C:nucleus"/>
    <property type="evidence" value="ECO:0000318"/>
    <property type="project" value="GO_Central"/>
</dbReference>
<dbReference type="GO" id="GO:0061575">
    <property type="term" value="F:cyclin-dependent protein serine/threonine kinase activator activity"/>
    <property type="evidence" value="ECO:0000318"/>
    <property type="project" value="GO_Central"/>
</dbReference>
<dbReference type="GO" id="GO:0051301">
    <property type="term" value="P:cell division"/>
    <property type="evidence" value="ECO:0007669"/>
    <property type="project" value="UniProtKB-KW"/>
</dbReference>
<dbReference type="GO" id="GO:0032786">
    <property type="term" value="P:positive regulation of DNA-templated transcription, elongation"/>
    <property type="evidence" value="ECO:0000318"/>
    <property type="project" value="GO_Central"/>
</dbReference>
<dbReference type="GO" id="GO:0045944">
    <property type="term" value="P:positive regulation of transcription by RNA polymerase II"/>
    <property type="evidence" value="ECO:0000318"/>
    <property type="project" value="GO_Central"/>
</dbReference>
<dbReference type="CDD" id="cd20587">
    <property type="entry name" value="CYCLIN_AcCycT_rpt1"/>
    <property type="match status" value="1"/>
</dbReference>
<dbReference type="CDD" id="cd20588">
    <property type="entry name" value="CYCLIN_AcCycT_rpt2"/>
    <property type="match status" value="1"/>
</dbReference>
<dbReference type="FunFam" id="1.10.472.10:FF:000026">
    <property type="entry name" value="Cyclin-T1-5 like"/>
    <property type="match status" value="1"/>
</dbReference>
<dbReference type="FunFam" id="1.10.472.10:FF:000028">
    <property type="entry name" value="Cyclin-T1-5 like"/>
    <property type="match status" value="1"/>
</dbReference>
<dbReference type="Gene3D" id="1.10.472.10">
    <property type="entry name" value="Cyclin-like"/>
    <property type="match status" value="2"/>
</dbReference>
<dbReference type="InterPro" id="IPR013763">
    <property type="entry name" value="Cyclin-like_dom"/>
</dbReference>
<dbReference type="InterPro" id="IPR036915">
    <property type="entry name" value="Cyclin-like_sf"/>
</dbReference>
<dbReference type="InterPro" id="IPR043198">
    <property type="entry name" value="Cyclin/Ssn8"/>
</dbReference>
<dbReference type="InterPro" id="IPR006671">
    <property type="entry name" value="Cyclin_N"/>
</dbReference>
<dbReference type="PANTHER" id="PTHR10026">
    <property type="entry name" value="CYCLIN"/>
    <property type="match status" value="1"/>
</dbReference>
<dbReference type="Pfam" id="PF00134">
    <property type="entry name" value="Cyclin_N"/>
    <property type="match status" value="1"/>
</dbReference>
<dbReference type="Pfam" id="PF21797">
    <property type="entry name" value="CycT2-like_C"/>
    <property type="match status" value="1"/>
</dbReference>
<dbReference type="PIRSF" id="PIRSF036580">
    <property type="entry name" value="Cyclin_L"/>
    <property type="match status" value="1"/>
</dbReference>
<dbReference type="SMART" id="SM00385">
    <property type="entry name" value="CYCLIN"/>
    <property type="match status" value="2"/>
</dbReference>
<dbReference type="SUPFAM" id="SSF47954">
    <property type="entry name" value="Cyclin-like"/>
    <property type="match status" value="2"/>
</dbReference>
<reference key="1">
    <citation type="journal article" date="2005" name="BMC Biol.">
        <title>The sequence of rice chromosomes 11 and 12, rich in disease resistance genes and recent gene duplications.</title>
        <authorList>
            <consortium name="The rice chromosomes 11 and 12 sequencing consortia"/>
        </authorList>
    </citation>
    <scope>NUCLEOTIDE SEQUENCE [LARGE SCALE GENOMIC DNA]</scope>
    <source>
        <strain>cv. Nipponbare</strain>
    </source>
</reference>
<reference key="2">
    <citation type="journal article" date="2005" name="Nature">
        <title>The map-based sequence of the rice genome.</title>
        <authorList>
            <consortium name="International rice genome sequencing project (IRGSP)"/>
        </authorList>
    </citation>
    <scope>NUCLEOTIDE SEQUENCE [LARGE SCALE GENOMIC DNA]</scope>
    <source>
        <strain>cv. Nipponbare</strain>
    </source>
</reference>
<reference key="3">
    <citation type="journal article" date="2008" name="Nucleic Acids Res.">
        <title>The rice annotation project database (RAP-DB): 2008 update.</title>
        <authorList>
            <consortium name="The rice annotation project (RAP)"/>
        </authorList>
    </citation>
    <scope>GENOME REANNOTATION</scope>
    <source>
        <strain>cv. Nipponbare</strain>
    </source>
</reference>
<reference key="4">
    <citation type="journal article" date="2013" name="Rice">
        <title>Improvement of the Oryza sativa Nipponbare reference genome using next generation sequence and optical map data.</title>
        <authorList>
            <person name="Kawahara Y."/>
            <person name="de la Bastide M."/>
            <person name="Hamilton J.P."/>
            <person name="Kanamori H."/>
            <person name="McCombie W.R."/>
            <person name="Ouyang S."/>
            <person name="Schwartz D.C."/>
            <person name="Tanaka T."/>
            <person name="Wu J."/>
            <person name="Zhou S."/>
            <person name="Childs K.L."/>
            <person name="Davidson R.M."/>
            <person name="Lin H."/>
            <person name="Quesada-Ocampo L."/>
            <person name="Vaillancourt B."/>
            <person name="Sakai H."/>
            <person name="Lee S.S."/>
            <person name="Kim J."/>
            <person name="Numa H."/>
            <person name="Itoh T."/>
            <person name="Buell C.R."/>
            <person name="Matsumoto T."/>
        </authorList>
    </citation>
    <scope>GENOME REANNOTATION</scope>
    <source>
        <strain>cv. Nipponbare</strain>
    </source>
</reference>
<reference key="5">
    <citation type="journal article" date="2006" name="Mol. Genet. Genomics">
        <title>Genome-wide analysis of cyclin family in rice (Oryza sativa L.).</title>
        <authorList>
            <person name="La H."/>
            <person name="Li J."/>
            <person name="Ji Z."/>
            <person name="Cheng Y."/>
            <person name="Li X."/>
            <person name="Jiang S."/>
            <person name="Venkatesh P.N."/>
            <person name="Ramachandran S."/>
        </authorList>
    </citation>
    <scope>GENE FAMILY</scope>
    <scope>NOMENCLATURE</scope>
</reference>
<keyword id="KW-0131">Cell cycle</keyword>
<keyword id="KW-0132">Cell division</keyword>
<keyword id="KW-0195">Cyclin</keyword>
<keyword id="KW-1185">Reference proteome</keyword>
<proteinExistence type="inferred from homology"/>
<comment type="similarity">
    <text evidence="2">Belongs to the cyclin family. Cyclin T subfamily.</text>
</comment>
<comment type="sequence caution" evidence="2">
    <conflict type="erroneous gene model prediction">
        <sequence resource="EMBL-CDS" id="AAX92939"/>
    </conflict>
</comment>
<comment type="sequence caution" evidence="2">
    <conflict type="erroneous gene model prediction">
        <sequence resource="EMBL-CDS" id="AAX92940"/>
    </conflict>
</comment>
<comment type="sequence caution" evidence="2">
    <conflict type="erroneous gene model prediction">
        <sequence resource="EMBL-CDS" id="ABA91549"/>
    </conflict>
</comment>
<comment type="sequence caution" evidence="2">
    <conflict type="erroneous gene model prediction">
        <sequence resource="EMBL-CDS" id="ABA91550"/>
    </conflict>
</comment>
<comment type="sequence caution" evidence="2">
    <conflict type="erroneous gene model prediction">
        <sequence resource="EMBL-CDS" id="BAF27643"/>
    </conflict>
</comment>
<protein>
    <recommendedName>
        <fullName>Cyclin-T1-3</fullName>
        <shortName>CycT1;3</shortName>
    </recommendedName>
</protein>
<sequence length="490" mass="55949">MDGIQTSDSSHHGIVENSPYRTPYDRYAEGGQLGASWYFSRKEIEENSLSRRDGIDLKKESYLRKSYCTFLQDLGMRLKVPQVTIATAIVFCHRFFLRQSHAKNDRRTIATVCMFLAGKVEETPRPLKDVILISYEIIHKKDAAAVQRIKQKEVYEQQKELILLGERVVLVTLGFDLNVHHPYKPLVEAIKKFKVAQNALAQVAWNFVNDGLRTSLCLQFKPHHIAAGAIFLAAKFLKVKLPSDGEKVWWQEFDVTPRQLEEVSNQMLELYEQNRVAPPPSQGNDTEGSSASVVNQRASGKAPGSSEEPPTHENHLAPRQSSTPGHQGYDHPHPEKQNSSQRVPQNDARDGTANSNEGPNMSSTMDAMKKIDKDKVKAALEKRRKSKGDVAKKVDIMDDDDLIERELEHGVELAAEDEKIKHERRQSWPHSAHREDHQGVARLTENTEEGELSIDSQEYRSPELDNRKRKDMHEHRNYDRGERDLKRLRS</sequence>
<evidence type="ECO:0000256" key="1">
    <source>
        <dbReference type="SAM" id="MobiDB-lite"/>
    </source>
</evidence>
<evidence type="ECO:0000305" key="2"/>
<accession>Q2RAC5</accession>
<accession>Q2RAC7</accession>
<accession>Q53NC7</accession>
<accession>Q53NC8</accession>
<accession>Q53ND2</accession>
<name>CCT13_ORYSJ</name>
<feature type="chain" id="PRO_0000287060" description="Cyclin-T1-3">
    <location>
        <begin position="1"/>
        <end position="490"/>
    </location>
</feature>
<feature type="region of interest" description="Disordered" evidence="1">
    <location>
        <begin position="275"/>
        <end position="391"/>
    </location>
</feature>
<feature type="region of interest" description="Disordered" evidence="1">
    <location>
        <begin position="414"/>
        <end position="490"/>
    </location>
</feature>
<feature type="compositionally biased region" description="Polar residues" evidence="1">
    <location>
        <begin position="282"/>
        <end position="298"/>
    </location>
</feature>
<feature type="compositionally biased region" description="Polar residues" evidence="1">
    <location>
        <begin position="352"/>
        <end position="365"/>
    </location>
</feature>
<feature type="compositionally biased region" description="Basic and acidic residues" evidence="1">
    <location>
        <begin position="367"/>
        <end position="391"/>
    </location>
</feature>
<feature type="compositionally biased region" description="Basic and acidic residues" evidence="1">
    <location>
        <begin position="457"/>
        <end position="490"/>
    </location>
</feature>
<gene>
    <name type="primary">CYCT1-3</name>
    <name type="ordered locus">Os11g0157100</name>
    <name type="ordered locus">LOC_Os11g05850</name>
</gene>